<comment type="function">
    <text evidence="4">May modulate WRKY transcription factor activities.</text>
</comment>
<comment type="interaction">
    <interactant intactId="EBI-25517821">
        <id>Q9FNP0</id>
    </interactant>
    <interactant intactId="EBI-4431481">
        <id>Q9FFS3</id>
        <label>WRKY24</label>
    </interactant>
    <organismsDiffer>false</organismsDiffer>
    <experiments>3</experiments>
</comment>
<comment type="interaction">
    <interactant intactId="EBI-25517821">
        <id>Q9FNP0</id>
    </interactant>
    <interactant intactId="EBI-1235953">
        <id>Q8GY11</id>
        <label>WRKY43</label>
    </interactant>
    <organismsDiffer>false</organismsDiffer>
    <experiments>3</experiments>
</comment>
<comment type="interaction">
    <interactant intactId="EBI-25517821">
        <id>Q9FNP0</id>
    </interactant>
    <interactant intactId="EBI-25517688">
        <id>Q8VWQ4</id>
        <label>WRKY56</label>
    </interactant>
    <organismsDiffer>false</organismsDiffer>
    <experiments>3</experiments>
</comment>
<comment type="subcellular location">
    <subcellularLocation>
        <location evidence="4">Nucleus</location>
    </subcellularLocation>
</comment>
<comment type="alternative products">
    <event type="alternative splicing"/>
    <isoform>
        <id>Q9FNP0-1</id>
        <name>1</name>
        <sequence type="displayed"/>
    </isoform>
    <isoform>
        <id>Q9FNP0-2</id>
        <name>2</name>
        <sequence type="described" ref="VSP_057494"/>
    </isoform>
</comment>
<comment type="PTM">
    <text evidence="6">Phosphorylated on serine and threonine residues by MPK6.</text>
</comment>
<comment type="sequence caution" evidence="9">
    <conflict type="erroneous termination">
        <sequence resource="EMBL-CDS" id="ABK28690"/>
    </conflict>
    <text>Extended C-terminus.</text>
</comment>
<feature type="chain" id="PRO_0000432321" description="VQ motif-containing protein 31">
    <location>
        <begin position="1"/>
        <end position="173"/>
    </location>
</feature>
<feature type="region of interest" description="Disordered" evidence="5">
    <location>
        <begin position="76"/>
        <end position="105"/>
    </location>
</feature>
<feature type="region of interest" description="Disordered" evidence="5">
    <location>
        <begin position="143"/>
        <end position="173"/>
    </location>
</feature>
<feature type="short sequence motif" description="VQ" evidence="9">
    <location>
        <begin position="27"/>
        <end position="36"/>
    </location>
</feature>
<feature type="compositionally biased region" description="Polar residues" evidence="5">
    <location>
        <begin position="86"/>
        <end position="105"/>
    </location>
</feature>
<feature type="compositionally biased region" description="Low complexity" evidence="5">
    <location>
        <begin position="154"/>
        <end position="165"/>
    </location>
</feature>
<feature type="modified residue" description="Phosphothreonine" evidence="6">
    <location>
        <position position="46"/>
    </location>
</feature>
<feature type="modified residue" description="Phosphoserine" evidence="3">
    <location>
        <position position="92"/>
    </location>
</feature>
<feature type="modified residue" description="Phosphoserine" evidence="3">
    <location>
        <position position="103"/>
    </location>
</feature>
<feature type="modified residue" description="Phosphoserine" evidence="6">
    <location>
        <position position="146"/>
    </location>
</feature>
<feature type="modified residue" description="Phosphoserine" evidence="2">
    <location>
        <position position="149"/>
    </location>
</feature>
<feature type="modified residue" description="Phosphothreonine" evidence="1">
    <location>
        <position position="165"/>
    </location>
</feature>
<feature type="modified residue" description="Phosphoserine" evidence="3">
    <location>
        <position position="166"/>
    </location>
</feature>
<feature type="modified residue" description="Phosphoserine" evidence="1">
    <location>
        <position position="170"/>
    </location>
</feature>
<feature type="splice variant" id="VSP_057494" description="In isoform 2.">
    <location>
        <begin position="88"/>
        <end position="118"/>
    </location>
</feature>
<accession>Q9FNP0</accession>
<accession>A0MFE8</accession>
<accession>Q8LE89</accession>
<proteinExistence type="evidence at protein level"/>
<gene>
    <name evidence="7" type="primary">VQ31</name>
    <name evidence="8" type="synonym">MVQ6</name>
    <name evidence="10" type="ordered locus">At5g08480</name>
    <name evidence="11" type="ORF">MAH20.4</name>
</gene>
<organism>
    <name type="scientific">Arabidopsis thaliana</name>
    <name type="common">Mouse-ear cress</name>
    <dbReference type="NCBI Taxonomy" id="3702"/>
    <lineage>
        <taxon>Eukaryota</taxon>
        <taxon>Viridiplantae</taxon>
        <taxon>Streptophyta</taxon>
        <taxon>Embryophyta</taxon>
        <taxon>Tracheophyta</taxon>
        <taxon>Spermatophyta</taxon>
        <taxon>Magnoliopsida</taxon>
        <taxon>eudicotyledons</taxon>
        <taxon>Gunneridae</taxon>
        <taxon>Pentapetalae</taxon>
        <taxon>rosids</taxon>
        <taxon>malvids</taxon>
        <taxon>Brassicales</taxon>
        <taxon>Brassicaceae</taxon>
        <taxon>Camelineae</taxon>
        <taxon>Arabidopsis</taxon>
    </lineage>
</organism>
<reference key="1">
    <citation type="journal article" date="1997" name="DNA Res.">
        <title>Structural analysis of Arabidopsis thaliana chromosome 5. II. Sequence features of the regions of 1,044,062 bp covered by thirteen physically assigned P1 clones.</title>
        <authorList>
            <person name="Kotani H."/>
            <person name="Nakamura Y."/>
            <person name="Sato S."/>
            <person name="Kaneko T."/>
            <person name="Asamizu E."/>
            <person name="Miyajima N."/>
            <person name="Tabata S."/>
        </authorList>
    </citation>
    <scope>NUCLEOTIDE SEQUENCE [LARGE SCALE GENOMIC DNA]</scope>
    <source>
        <strain>cv. Columbia</strain>
    </source>
</reference>
<reference key="2">
    <citation type="journal article" date="2017" name="Plant J.">
        <title>Araport11: a complete reannotation of the Arabidopsis thaliana reference genome.</title>
        <authorList>
            <person name="Cheng C.Y."/>
            <person name="Krishnakumar V."/>
            <person name="Chan A.P."/>
            <person name="Thibaud-Nissen F."/>
            <person name="Schobel S."/>
            <person name="Town C.D."/>
        </authorList>
    </citation>
    <scope>GENOME REANNOTATION</scope>
    <source>
        <strain>cv. Columbia</strain>
    </source>
</reference>
<reference key="3">
    <citation type="journal article" date="2006" name="Plant Biotechnol. J.">
        <title>Simultaneous high-throughput recombinational cloning of open reading frames in closed and open configurations.</title>
        <authorList>
            <person name="Underwood B.A."/>
            <person name="Vanderhaeghen R."/>
            <person name="Whitford R."/>
            <person name="Town C.D."/>
            <person name="Hilson P."/>
        </authorList>
    </citation>
    <scope>NUCLEOTIDE SEQUENCE [LARGE SCALE MRNA] (ISOFORMS 1 AND 2)</scope>
    <source>
        <strain>cv. Columbia</strain>
    </source>
</reference>
<reference key="4">
    <citation type="submission" date="2006-07" db="EMBL/GenBank/DDBJ databases">
        <title>Arabidopsis ORF clones.</title>
        <authorList>
            <person name="Quinitio C."/>
            <person name="Chen H."/>
            <person name="Kim C.J."/>
            <person name="Shinn P."/>
            <person name="Ecker J.R."/>
        </authorList>
    </citation>
    <scope>NUCLEOTIDE SEQUENCE [LARGE SCALE MRNA] (ISOFORM 1)</scope>
    <source>
        <strain>cv. Columbia</strain>
    </source>
</reference>
<reference key="5">
    <citation type="submission" date="2002-03" db="EMBL/GenBank/DDBJ databases">
        <title>Full-length cDNA from Arabidopsis thaliana.</title>
        <authorList>
            <person name="Brover V.V."/>
            <person name="Troukhan M.E."/>
            <person name="Alexandrov N.A."/>
            <person name="Lu Y.-P."/>
            <person name="Flavell R.B."/>
            <person name="Feldmann K.A."/>
        </authorList>
    </citation>
    <scope>NUCLEOTIDE SEQUENCE [LARGE SCALE MRNA] (ISOFORM 2)</scope>
    <source>
        <strain>cv. Columbia</strain>
    </source>
</reference>
<reference key="6">
    <citation type="journal article" date="2012" name="Plant Physiol.">
        <title>Structural and functional analysis of VQ motif-containing proteins in Arabidopsis as interacting proteins of WRKY transcription factors.</title>
        <authorList>
            <person name="Cheng Y."/>
            <person name="Zhou Y."/>
            <person name="Yang Y."/>
            <person name="Chi Y.J."/>
            <person name="Zhou J."/>
            <person name="Chen J.Y."/>
            <person name="Wang F."/>
            <person name="Fan B."/>
            <person name="Shi K."/>
            <person name="Zhou Y.H."/>
            <person name="Yu J.Q."/>
            <person name="Chen Z."/>
        </authorList>
    </citation>
    <scope>GENE FAMILY</scope>
    <scope>NOMENCLATURE</scope>
</reference>
<reference key="7">
    <citation type="journal article" date="2014" name="New Phytol.">
        <title>The Arabidopsis thaliana mitogen-activated protein kinases MPK3 and MPK6 target a subclass of 'VQ-motif'-containing proteins to regulate immune responses.</title>
        <authorList>
            <person name="Pecher P."/>
            <person name="Eschen-Lippold L."/>
            <person name="Herklotz S."/>
            <person name="Kuhle K."/>
            <person name="Naumann K."/>
            <person name="Bethke G."/>
            <person name="Uhrig J."/>
            <person name="Weyhe M."/>
            <person name="Scheel D."/>
            <person name="Lee J."/>
        </authorList>
    </citation>
    <scope>IDENTIFICATION BY MASS SPECTROMETRY</scope>
    <scope>PHOSPHORYLATION AT THR-46 AND SER-146</scope>
</reference>
<protein>
    <recommendedName>
        <fullName evidence="7">VQ motif-containing protein 31</fullName>
        <shortName evidence="7">AtVQ31</shortName>
    </recommendedName>
    <alternativeName>
        <fullName evidence="8">MPK3/6-targeted VQ-motif-containing protein 6</fullName>
    </alternativeName>
</protein>
<dbReference type="EMBL" id="AB006697">
    <property type="protein sequence ID" value="BAB09997.1"/>
    <property type="molecule type" value="Genomic_DNA"/>
</dbReference>
<dbReference type="EMBL" id="CP002688">
    <property type="protein sequence ID" value="AED91308.1"/>
    <property type="molecule type" value="Genomic_DNA"/>
</dbReference>
<dbReference type="EMBL" id="CP002688">
    <property type="protein sequence ID" value="AED91309.1"/>
    <property type="molecule type" value="Genomic_DNA"/>
</dbReference>
<dbReference type="EMBL" id="CP002688">
    <property type="protein sequence ID" value="ANM68666.1"/>
    <property type="molecule type" value="Genomic_DNA"/>
</dbReference>
<dbReference type="EMBL" id="DQ446932">
    <property type="protein sequence ID" value="ABE66143.1"/>
    <property type="molecule type" value="mRNA"/>
</dbReference>
<dbReference type="EMBL" id="DQ446933">
    <property type="protein sequence ID" value="ABE66144.1"/>
    <property type="molecule type" value="mRNA"/>
</dbReference>
<dbReference type="EMBL" id="DQ653274">
    <property type="protein sequence ID" value="ABK28690.1"/>
    <property type="status" value="ALT_SEQ"/>
    <property type="molecule type" value="mRNA"/>
</dbReference>
<dbReference type="EMBL" id="BT026100">
    <property type="protein sequence ID" value="ABG48456.1"/>
    <property type="molecule type" value="mRNA"/>
</dbReference>
<dbReference type="EMBL" id="AY085562">
    <property type="protein sequence ID" value="AAM62784.1"/>
    <property type="molecule type" value="mRNA"/>
</dbReference>
<dbReference type="RefSeq" id="NP_001318511.1">
    <molecule id="Q9FNP0-2"/>
    <property type="nucleotide sequence ID" value="NM_001343006.1"/>
</dbReference>
<dbReference type="RefSeq" id="NP_001330395.1">
    <molecule id="Q9FNP0-1"/>
    <property type="nucleotide sequence ID" value="NM_001343007.1"/>
</dbReference>
<dbReference type="RefSeq" id="NP_850793.1">
    <molecule id="Q9FNP0-1"/>
    <property type="nucleotide sequence ID" value="NM_180462.2"/>
</dbReference>
<dbReference type="FunCoup" id="Q9FNP0">
    <property type="interactions" value="1"/>
</dbReference>
<dbReference type="IntAct" id="Q9FNP0">
    <property type="interactions" value="3"/>
</dbReference>
<dbReference type="STRING" id="3702.Q9FNP0"/>
<dbReference type="GlyGen" id="Q9FNP0">
    <property type="glycosylation" value="1 site"/>
</dbReference>
<dbReference type="iPTMnet" id="Q9FNP0"/>
<dbReference type="PaxDb" id="3702-AT5G08480.2"/>
<dbReference type="ProteomicsDB" id="242752">
    <molecule id="Q9FNP0-1"/>
</dbReference>
<dbReference type="EnsemblPlants" id="AT5G08480.1">
    <molecule id="Q9FNP0-2"/>
    <property type="protein sequence ID" value="AT5G08480.1"/>
    <property type="gene ID" value="AT5G08480"/>
</dbReference>
<dbReference type="EnsemblPlants" id="AT5G08480.2">
    <molecule id="Q9FNP0-1"/>
    <property type="protein sequence ID" value="AT5G08480.2"/>
    <property type="gene ID" value="AT5G08480"/>
</dbReference>
<dbReference type="EnsemblPlants" id="AT5G08480.3">
    <molecule id="Q9FNP0-1"/>
    <property type="protein sequence ID" value="AT5G08480.3"/>
    <property type="gene ID" value="AT5G08480"/>
</dbReference>
<dbReference type="GeneID" id="830747"/>
<dbReference type="Gramene" id="AT5G08480.1">
    <molecule id="Q9FNP0-2"/>
    <property type="protein sequence ID" value="AT5G08480.1"/>
    <property type="gene ID" value="AT5G08480"/>
</dbReference>
<dbReference type="Gramene" id="AT5G08480.2">
    <molecule id="Q9FNP0-1"/>
    <property type="protein sequence ID" value="AT5G08480.2"/>
    <property type="gene ID" value="AT5G08480"/>
</dbReference>
<dbReference type="Gramene" id="AT5G08480.3">
    <molecule id="Q9FNP0-1"/>
    <property type="protein sequence ID" value="AT5G08480.3"/>
    <property type="gene ID" value="AT5G08480"/>
</dbReference>
<dbReference type="KEGG" id="ath:AT5G08480"/>
<dbReference type="Araport" id="AT5G08480"/>
<dbReference type="TAIR" id="AT5G08480"/>
<dbReference type="eggNOG" id="ENOG502S1DP">
    <property type="taxonomic scope" value="Eukaryota"/>
</dbReference>
<dbReference type="InParanoid" id="Q9FNP0"/>
<dbReference type="OMA" id="HERRQYM"/>
<dbReference type="OrthoDB" id="783357at2759"/>
<dbReference type="PhylomeDB" id="Q9FNP0"/>
<dbReference type="PRO" id="PR:Q9FNP0"/>
<dbReference type="Proteomes" id="UP000006548">
    <property type="component" value="Chromosome 5"/>
</dbReference>
<dbReference type="ExpressionAtlas" id="Q9FNP0">
    <property type="expression patterns" value="differential"/>
</dbReference>
<dbReference type="GO" id="GO:0005634">
    <property type="term" value="C:nucleus"/>
    <property type="evidence" value="ECO:0007669"/>
    <property type="project" value="UniProtKB-SubCell"/>
</dbReference>
<dbReference type="InterPro" id="IPR008889">
    <property type="entry name" value="VQ"/>
</dbReference>
<dbReference type="InterPro" id="IPR039611">
    <property type="entry name" value="VQ_4/11/13/19/31/33"/>
</dbReference>
<dbReference type="PANTHER" id="PTHR33402">
    <property type="entry name" value="VQ MOTIF-CONTAINING PROTEIN 11-LIKE"/>
    <property type="match status" value="1"/>
</dbReference>
<dbReference type="PANTHER" id="PTHR33402:SF22">
    <property type="entry name" value="VQ MOTIF-CONTAINING PROTEIN 31"/>
    <property type="match status" value="1"/>
</dbReference>
<dbReference type="Pfam" id="PF05678">
    <property type="entry name" value="VQ"/>
    <property type="match status" value="1"/>
</dbReference>
<keyword id="KW-0025">Alternative splicing</keyword>
<keyword id="KW-0539">Nucleus</keyword>
<keyword id="KW-0597">Phosphoprotein</keyword>
<keyword id="KW-1185">Reference proteome</keyword>
<evidence type="ECO:0000250" key="1">
    <source>
        <dbReference type="UniProtKB" id="O23660"/>
    </source>
</evidence>
<evidence type="ECO:0000250" key="2">
    <source>
        <dbReference type="UniProtKB" id="Q9FHZ3"/>
    </source>
</evidence>
<evidence type="ECO:0000250" key="3">
    <source>
        <dbReference type="UniProtKB" id="Q9LDZ1"/>
    </source>
</evidence>
<evidence type="ECO:0000250" key="4">
    <source>
        <dbReference type="UniProtKB" id="Q9M9F0"/>
    </source>
</evidence>
<evidence type="ECO:0000256" key="5">
    <source>
        <dbReference type="SAM" id="MobiDB-lite"/>
    </source>
</evidence>
<evidence type="ECO:0000269" key="6">
    <source>
    </source>
</evidence>
<evidence type="ECO:0000303" key="7">
    <source>
    </source>
</evidence>
<evidence type="ECO:0000303" key="8">
    <source>
    </source>
</evidence>
<evidence type="ECO:0000305" key="9"/>
<evidence type="ECO:0000312" key="10">
    <source>
        <dbReference type="Araport" id="AT5G08480"/>
    </source>
</evidence>
<evidence type="ECO:0000312" key="11">
    <source>
        <dbReference type="EMBL" id="BAB09997.1"/>
    </source>
</evidence>
<sequence>MNSKGSQNVATTCKPVTTFVQTDTNTFREIVQRLTGPTENNAAAATPEATVIKTAIQKRPTSKLHERRQCMRPKLEIVKPPLSFKPTGTTPSSKSGNTNLLTSPVGTPSSLFSNLSLIEGEPDSCTTNIEEEEKAIKERRFYLHPSPRSKPGYTEPELLTLFPLTSPNSSGKP</sequence>
<name>VQ31_ARATH</name>